<dbReference type="EC" id="2.7.4.6" evidence="1"/>
<dbReference type="EMBL" id="CP000076">
    <property type="protein sequence ID" value="AAY94187.1"/>
    <property type="molecule type" value="Genomic_DNA"/>
</dbReference>
<dbReference type="RefSeq" id="WP_011063211.1">
    <property type="nucleotide sequence ID" value="NC_004129.6"/>
</dbReference>
<dbReference type="SMR" id="Q4K6U5"/>
<dbReference type="STRING" id="220664.PFL_4958"/>
<dbReference type="GeneID" id="57477940"/>
<dbReference type="KEGG" id="pfl:PFL_4958"/>
<dbReference type="PATRIC" id="fig|220664.5.peg.5079"/>
<dbReference type="eggNOG" id="COG0105">
    <property type="taxonomic scope" value="Bacteria"/>
</dbReference>
<dbReference type="HOGENOM" id="CLU_060216_8_1_6"/>
<dbReference type="Proteomes" id="UP000008540">
    <property type="component" value="Chromosome"/>
</dbReference>
<dbReference type="GO" id="GO:0005737">
    <property type="term" value="C:cytoplasm"/>
    <property type="evidence" value="ECO:0007669"/>
    <property type="project" value="UniProtKB-SubCell"/>
</dbReference>
<dbReference type="GO" id="GO:0005524">
    <property type="term" value="F:ATP binding"/>
    <property type="evidence" value="ECO:0007669"/>
    <property type="project" value="UniProtKB-UniRule"/>
</dbReference>
<dbReference type="GO" id="GO:0046872">
    <property type="term" value="F:metal ion binding"/>
    <property type="evidence" value="ECO:0007669"/>
    <property type="project" value="UniProtKB-KW"/>
</dbReference>
<dbReference type="GO" id="GO:0004550">
    <property type="term" value="F:nucleoside diphosphate kinase activity"/>
    <property type="evidence" value="ECO:0007669"/>
    <property type="project" value="UniProtKB-UniRule"/>
</dbReference>
<dbReference type="GO" id="GO:0006241">
    <property type="term" value="P:CTP biosynthetic process"/>
    <property type="evidence" value="ECO:0007669"/>
    <property type="project" value="UniProtKB-UniRule"/>
</dbReference>
<dbReference type="GO" id="GO:0006183">
    <property type="term" value="P:GTP biosynthetic process"/>
    <property type="evidence" value="ECO:0007669"/>
    <property type="project" value="UniProtKB-UniRule"/>
</dbReference>
<dbReference type="GO" id="GO:0006228">
    <property type="term" value="P:UTP biosynthetic process"/>
    <property type="evidence" value="ECO:0007669"/>
    <property type="project" value="UniProtKB-UniRule"/>
</dbReference>
<dbReference type="CDD" id="cd04413">
    <property type="entry name" value="NDPk_I"/>
    <property type="match status" value="1"/>
</dbReference>
<dbReference type="FunFam" id="3.30.70.141:FF:000001">
    <property type="entry name" value="Nucleoside diphosphate kinase"/>
    <property type="match status" value="1"/>
</dbReference>
<dbReference type="Gene3D" id="3.30.70.141">
    <property type="entry name" value="Nucleoside diphosphate kinase-like domain"/>
    <property type="match status" value="1"/>
</dbReference>
<dbReference type="HAMAP" id="MF_00451">
    <property type="entry name" value="NDP_kinase"/>
    <property type="match status" value="1"/>
</dbReference>
<dbReference type="InterPro" id="IPR034907">
    <property type="entry name" value="NDK-like_dom"/>
</dbReference>
<dbReference type="InterPro" id="IPR036850">
    <property type="entry name" value="NDK-like_dom_sf"/>
</dbReference>
<dbReference type="InterPro" id="IPR001564">
    <property type="entry name" value="Nucleoside_diP_kinase"/>
</dbReference>
<dbReference type="InterPro" id="IPR023005">
    <property type="entry name" value="Nucleoside_diP_kinase_AS"/>
</dbReference>
<dbReference type="NCBIfam" id="NF001908">
    <property type="entry name" value="PRK00668.1"/>
    <property type="match status" value="1"/>
</dbReference>
<dbReference type="PANTHER" id="PTHR46161">
    <property type="entry name" value="NUCLEOSIDE DIPHOSPHATE KINASE"/>
    <property type="match status" value="1"/>
</dbReference>
<dbReference type="PANTHER" id="PTHR46161:SF3">
    <property type="entry name" value="NUCLEOSIDE DIPHOSPHATE KINASE DDB_G0292928-RELATED"/>
    <property type="match status" value="1"/>
</dbReference>
<dbReference type="Pfam" id="PF00334">
    <property type="entry name" value="NDK"/>
    <property type="match status" value="1"/>
</dbReference>
<dbReference type="PRINTS" id="PR01243">
    <property type="entry name" value="NUCDPKINASE"/>
</dbReference>
<dbReference type="SMART" id="SM00562">
    <property type="entry name" value="NDK"/>
    <property type="match status" value="1"/>
</dbReference>
<dbReference type="SUPFAM" id="SSF54919">
    <property type="entry name" value="Nucleoside diphosphate kinase, NDK"/>
    <property type="match status" value="1"/>
</dbReference>
<dbReference type="PROSITE" id="PS00469">
    <property type="entry name" value="NDPK"/>
    <property type="match status" value="1"/>
</dbReference>
<dbReference type="PROSITE" id="PS51374">
    <property type="entry name" value="NDPK_LIKE"/>
    <property type="match status" value="1"/>
</dbReference>
<name>NDK_PSEF5</name>
<evidence type="ECO:0000255" key="1">
    <source>
        <dbReference type="HAMAP-Rule" id="MF_00451"/>
    </source>
</evidence>
<organism>
    <name type="scientific">Pseudomonas fluorescens (strain ATCC BAA-477 / NRRL B-23932 / Pf-5)</name>
    <dbReference type="NCBI Taxonomy" id="220664"/>
    <lineage>
        <taxon>Bacteria</taxon>
        <taxon>Pseudomonadati</taxon>
        <taxon>Pseudomonadota</taxon>
        <taxon>Gammaproteobacteria</taxon>
        <taxon>Pseudomonadales</taxon>
        <taxon>Pseudomonadaceae</taxon>
        <taxon>Pseudomonas</taxon>
    </lineage>
</organism>
<proteinExistence type="inferred from homology"/>
<sequence>MAVQRTFSIIKPDAVAKNVIGKIVSRFEEAGLRVVASKMKQLSKAEAEGFYAEHSERGFFGELVAFMTSGPVVVQVLEGENAIVRNRELMGATNPKEAAAGTIRADFAESIDANAVHGSDSEAAAAREIAYFFAATEVTAR</sequence>
<reference key="1">
    <citation type="journal article" date="2005" name="Nat. Biotechnol.">
        <title>Complete genome sequence of the plant commensal Pseudomonas fluorescens Pf-5.</title>
        <authorList>
            <person name="Paulsen I.T."/>
            <person name="Press C.M."/>
            <person name="Ravel J."/>
            <person name="Kobayashi D.Y."/>
            <person name="Myers G.S.A."/>
            <person name="Mavrodi D.V."/>
            <person name="DeBoy R.T."/>
            <person name="Seshadri R."/>
            <person name="Ren Q."/>
            <person name="Madupu R."/>
            <person name="Dodson R.J."/>
            <person name="Durkin A.S."/>
            <person name="Brinkac L.M."/>
            <person name="Daugherty S.C."/>
            <person name="Sullivan S.A."/>
            <person name="Rosovitz M.J."/>
            <person name="Gwinn M.L."/>
            <person name="Zhou L."/>
            <person name="Schneider D.J."/>
            <person name="Cartinhour S.W."/>
            <person name="Nelson W.C."/>
            <person name="Weidman J."/>
            <person name="Watkins K."/>
            <person name="Tran K."/>
            <person name="Khouri H."/>
            <person name="Pierson E.A."/>
            <person name="Pierson L.S. III"/>
            <person name="Thomashow L.S."/>
            <person name="Loper J.E."/>
        </authorList>
    </citation>
    <scope>NUCLEOTIDE SEQUENCE [LARGE SCALE GENOMIC DNA]</scope>
    <source>
        <strain>ATCC BAA-477 / NRRL B-23932 / Pf-5</strain>
    </source>
</reference>
<accession>Q4K6U5</accession>
<keyword id="KW-0067">ATP-binding</keyword>
<keyword id="KW-0963">Cytoplasm</keyword>
<keyword id="KW-0418">Kinase</keyword>
<keyword id="KW-0460">Magnesium</keyword>
<keyword id="KW-0479">Metal-binding</keyword>
<keyword id="KW-0546">Nucleotide metabolism</keyword>
<keyword id="KW-0547">Nucleotide-binding</keyword>
<keyword id="KW-0597">Phosphoprotein</keyword>
<keyword id="KW-0808">Transferase</keyword>
<feature type="chain" id="PRO_0000226570" description="Nucleoside diphosphate kinase">
    <location>
        <begin position="1"/>
        <end position="141"/>
    </location>
</feature>
<feature type="active site" description="Pros-phosphohistidine intermediate" evidence="1">
    <location>
        <position position="117"/>
    </location>
</feature>
<feature type="binding site" evidence="1">
    <location>
        <position position="11"/>
    </location>
    <ligand>
        <name>ATP</name>
        <dbReference type="ChEBI" id="CHEBI:30616"/>
    </ligand>
</feature>
<feature type="binding site" evidence="1">
    <location>
        <position position="59"/>
    </location>
    <ligand>
        <name>ATP</name>
        <dbReference type="ChEBI" id="CHEBI:30616"/>
    </ligand>
</feature>
<feature type="binding site" evidence="1">
    <location>
        <position position="87"/>
    </location>
    <ligand>
        <name>ATP</name>
        <dbReference type="ChEBI" id="CHEBI:30616"/>
    </ligand>
</feature>
<feature type="binding site" evidence="1">
    <location>
        <position position="93"/>
    </location>
    <ligand>
        <name>ATP</name>
        <dbReference type="ChEBI" id="CHEBI:30616"/>
    </ligand>
</feature>
<feature type="binding site" evidence="1">
    <location>
        <position position="104"/>
    </location>
    <ligand>
        <name>ATP</name>
        <dbReference type="ChEBI" id="CHEBI:30616"/>
    </ligand>
</feature>
<feature type="binding site" evidence="1">
    <location>
        <position position="114"/>
    </location>
    <ligand>
        <name>ATP</name>
        <dbReference type="ChEBI" id="CHEBI:30616"/>
    </ligand>
</feature>
<comment type="function">
    <text evidence="1">Major role in the synthesis of nucleoside triphosphates other than ATP. The ATP gamma phosphate is transferred to the NDP beta phosphate via a ping-pong mechanism, using a phosphorylated active-site intermediate.</text>
</comment>
<comment type="catalytic activity">
    <reaction evidence="1">
        <text>a 2'-deoxyribonucleoside 5'-diphosphate + ATP = a 2'-deoxyribonucleoside 5'-triphosphate + ADP</text>
        <dbReference type="Rhea" id="RHEA:44640"/>
        <dbReference type="ChEBI" id="CHEBI:30616"/>
        <dbReference type="ChEBI" id="CHEBI:61560"/>
        <dbReference type="ChEBI" id="CHEBI:73316"/>
        <dbReference type="ChEBI" id="CHEBI:456216"/>
        <dbReference type="EC" id="2.7.4.6"/>
    </reaction>
</comment>
<comment type="catalytic activity">
    <reaction evidence="1">
        <text>a ribonucleoside 5'-diphosphate + ATP = a ribonucleoside 5'-triphosphate + ADP</text>
        <dbReference type="Rhea" id="RHEA:18113"/>
        <dbReference type="ChEBI" id="CHEBI:30616"/>
        <dbReference type="ChEBI" id="CHEBI:57930"/>
        <dbReference type="ChEBI" id="CHEBI:61557"/>
        <dbReference type="ChEBI" id="CHEBI:456216"/>
        <dbReference type="EC" id="2.7.4.6"/>
    </reaction>
</comment>
<comment type="cofactor">
    <cofactor evidence="1">
        <name>Mg(2+)</name>
        <dbReference type="ChEBI" id="CHEBI:18420"/>
    </cofactor>
</comment>
<comment type="subunit">
    <text evidence="1">Homotetramer.</text>
</comment>
<comment type="subcellular location">
    <subcellularLocation>
        <location evidence="1">Cytoplasm</location>
    </subcellularLocation>
</comment>
<comment type="similarity">
    <text evidence="1">Belongs to the NDK family.</text>
</comment>
<protein>
    <recommendedName>
        <fullName evidence="1">Nucleoside diphosphate kinase</fullName>
        <shortName evidence="1">NDK</shortName>
        <shortName evidence="1">NDP kinase</shortName>
        <ecNumber evidence="1">2.7.4.6</ecNumber>
    </recommendedName>
    <alternativeName>
        <fullName evidence="1">Nucleoside-2-P kinase</fullName>
    </alternativeName>
</protein>
<gene>
    <name evidence="1" type="primary">ndk</name>
    <name type="ordered locus">PFL_4958</name>
</gene>